<keyword id="KW-1003">Cell membrane</keyword>
<keyword id="KW-0963">Cytoplasm</keyword>
<keyword id="KW-0967">Endosome</keyword>
<keyword id="KW-0446">Lipid-binding</keyword>
<keyword id="KW-0472">Membrane</keyword>
<keyword id="KW-0653">Protein transport</keyword>
<keyword id="KW-1185">Reference proteome</keyword>
<keyword id="KW-0813">Transport</keyword>
<feature type="chain" id="PRO_0000213857" description="Sorting nexin-11">
    <location>
        <begin position="1"/>
        <end position="271"/>
    </location>
</feature>
<feature type="domain" description="PX" evidence="2">
    <location>
        <begin position="16"/>
        <end position="132"/>
    </location>
</feature>
<feature type="region of interest" description="Important for membrane trafficking" evidence="1">
    <location>
        <begin position="135"/>
        <end position="139"/>
    </location>
</feature>
<feature type="region of interest" description="Disordered" evidence="3">
    <location>
        <begin position="185"/>
        <end position="271"/>
    </location>
</feature>
<feature type="compositionally biased region" description="Low complexity" evidence="3">
    <location>
        <begin position="213"/>
        <end position="230"/>
    </location>
</feature>
<feature type="binding site" evidence="1">
    <location>
        <position position="59"/>
    </location>
    <ligand>
        <name>a 1,2-diacyl-sn-glycero-3-phospho-(1D-myo-inositol-3-phosphate)</name>
        <dbReference type="ChEBI" id="CHEBI:58088"/>
    </ligand>
</feature>
<feature type="binding site" evidence="1">
    <location>
        <position position="85"/>
    </location>
    <ligand>
        <name>a 1,2-diacyl-sn-glycero-3-phospho-(1D-myo-inositol-3-phosphate)</name>
        <dbReference type="ChEBI" id="CHEBI:58088"/>
    </ligand>
</feature>
<feature type="binding site" evidence="1">
    <location>
        <position position="99"/>
    </location>
    <ligand>
        <name>a 1,2-diacyl-sn-glycero-3-phospho-(1D-myo-inositol-3-phosphate)</name>
        <dbReference type="ChEBI" id="CHEBI:58088"/>
    </ligand>
</feature>
<gene>
    <name type="primary">Snx11</name>
</gene>
<protein>
    <recommendedName>
        <fullName>Sorting nexin-11</fullName>
    </recommendedName>
</protein>
<accession>Q91WL6</accession>
<accession>Q3V3A6</accession>
<reference key="1">
    <citation type="journal article" date="2005" name="Science">
        <title>The transcriptional landscape of the mammalian genome.</title>
        <authorList>
            <person name="Carninci P."/>
            <person name="Kasukawa T."/>
            <person name="Katayama S."/>
            <person name="Gough J."/>
            <person name="Frith M.C."/>
            <person name="Maeda N."/>
            <person name="Oyama R."/>
            <person name="Ravasi T."/>
            <person name="Lenhard B."/>
            <person name="Wells C."/>
            <person name="Kodzius R."/>
            <person name="Shimokawa K."/>
            <person name="Bajic V.B."/>
            <person name="Brenner S.E."/>
            <person name="Batalov S."/>
            <person name="Forrest A.R."/>
            <person name="Zavolan M."/>
            <person name="Davis M.J."/>
            <person name="Wilming L.G."/>
            <person name="Aidinis V."/>
            <person name="Allen J.E."/>
            <person name="Ambesi-Impiombato A."/>
            <person name="Apweiler R."/>
            <person name="Aturaliya R.N."/>
            <person name="Bailey T.L."/>
            <person name="Bansal M."/>
            <person name="Baxter L."/>
            <person name="Beisel K.W."/>
            <person name="Bersano T."/>
            <person name="Bono H."/>
            <person name="Chalk A.M."/>
            <person name="Chiu K.P."/>
            <person name="Choudhary V."/>
            <person name="Christoffels A."/>
            <person name="Clutterbuck D.R."/>
            <person name="Crowe M.L."/>
            <person name="Dalla E."/>
            <person name="Dalrymple B.P."/>
            <person name="de Bono B."/>
            <person name="Della Gatta G."/>
            <person name="di Bernardo D."/>
            <person name="Down T."/>
            <person name="Engstrom P."/>
            <person name="Fagiolini M."/>
            <person name="Faulkner G."/>
            <person name="Fletcher C.F."/>
            <person name="Fukushima T."/>
            <person name="Furuno M."/>
            <person name="Futaki S."/>
            <person name="Gariboldi M."/>
            <person name="Georgii-Hemming P."/>
            <person name="Gingeras T.R."/>
            <person name="Gojobori T."/>
            <person name="Green R.E."/>
            <person name="Gustincich S."/>
            <person name="Harbers M."/>
            <person name="Hayashi Y."/>
            <person name="Hensch T.K."/>
            <person name="Hirokawa N."/>
            <person name="Hill D."/>
            <person name="Huminiecki L."/>
            <person name="Iacono M."/>
            <person name="Ikeo K."/>
            <person name="Iwama A."/>
            <person name="Ishikawa T."/>
            <person name="Jakt M."/>
            <person name="Kanapin A."/>
            <person name="Katoh M."/>
            <person name="Kawasawa Y."/>
            <person name="Kelso J."/>
            <person name="Kitamura H."/>
            <person name="Kitano H."/>
            <person name="Kollias G."/>
            <person name="Krishnan S.P."/>
            <person name="Kruger A."/>
            <person name="Kummerfeld S.K."/>
            <person name="Kurochkin I.V."/>
            <person name="Lareau L.F."/>
            <person name="Lazarevic D."/>
            <person name="Lipovich L."/>
            <person name="Liu J."/>
            <person name="Liuni S."/>
            <person name="McWilliam S."/>
            <person name="Madan Babu M."/>
            <person name="Madera M."/>
            <person name="Marchionni L."/>
            <person name="Matsuda H."/>
            <person name="Matsuzawa S."/>
            <person name="Miki H."/>
            <person name="Mignone F."/>
            <person name="Miyake S."/>
            <person name="Morris K."/>
            <person name="Mottagui-Tabar S."/>
            <person name="Mulder N."/>
            <person name="Nakano N."/>
            <person name="Nakauchi H."/>
            <person name="Ng P."/>
            <person name="Nilsson R."/>
            <person name="Nishiguchi S."/>
            <person name="Nishikawa S."/>
            <person name="Nori F."/>
            <person name="Ohara O."/>
            <person name="Okazaki Y."/>
            <person name="Orlando V."/>
            <person name="Pang K.C."/>
            <person name="Pavan W.J."/>
            <person name="Pavesi G."/>
            <person name="Pesole G."/>
            <person name="Petrovsky N."/>
            <person name="Piazza S."/>
            <person name="Reed J."/>
            <person name="Reid J.F."/>
            <person name="Ring B.Z."/>
            <person name="Ringwald M."/>
            <person name="Rost B."/>
            <person name="Ruan Y."/>
            <person name="Salzberg S.L."/>
            <person name="Sandelin A."/>
            <person name="Schneider C."/>
            <person name="Schoenbach C."/>
            <person name="Sekiguchi K."/>
            <person name="Semple C.A."/>
            <person name="Seno S."/>
            <person name="Sessa L."/>
            <person name="Sheng Y."/>
            <person name="Shibata Y."/>
            <person name="Shimada H."/>
            <person name="Shimada K."/>
            <person name="Silva D."/>
            <person name="Sinclair B."/>
            <person name="Sperling S."/>
            <person name="Stupka E."/>
            <person name="Sugiura K."/>
            <person name="Sultana R."/>
            <person name="Takenaka Y."/>
            <person name="Taki K."/>
            <person name="Tammoja K."/>
            <person name="Tan S.L."/>
            <person name="Tang S."/>
            <person name="Taylor M.S."/>
            <person name="Tegner J."/>
            <person name="Teichmann S.A."/>
            <person name="Ueda H.R."/>
            <person name="van Nimwegen E."/>
            <person name="Verardo R."/>
            <person name="Wei C.L."/>
            <person name="Yagi K."/>
            <person name="Yamanishi H."/>
            <person name="Zabarovsky E."/>
            <person name="Zhu S."/>
            <person name="Zimmer A."/>
            <person name="Hide W."/>
            <person name="Bult C."/>
            <person name="Grimmond S.M."/>
            <person name="Teasdale R.D."/>
            <person name="Liu E.T."/>
            <person name="Brusic V."/>
            <person name="Quackenbush J."/>
            <person name="Wahlestedt C."/>
            <person name="Mattick J.S."/>
            <person name="Hume D.A."/>
            <person name="Kai C."/>
            <person name="Sasaki D."/>
            <person name="Tomaru Y."/>
            <person name="Fukuda S."/>
            <person name="Kanamori-Katayama M."/>
            <person name="Suzuki M."/>
            <person name="Aoki J."/>
            <person name="Arakawa T."/>
            <person name="Iida J."/>
            <person name="Imamura K."/>
            <person name="Itoh M."/>
            <person name="Kato T."/>
            <person name="Kawaji H."/>
            <person name="Kawagashira N."/>
            <person name="Kawashima T."/>
            <person name="Kojima M."/>
            <person name="Kondo S."/>
            <person name="Konno H."/>
            <person name="Nakano K."/>
            <person name="Ninomiya N."/>
            <person name="Nishio T."/>
            <person name="Okada M."/>
            <person name="Plessy C."/>
            <person name="Shibata K."/>
            <person name="Shiraki T."/>
            <person name="Suzuki S."/>
            <person name="Tagami M."/>
            <person name="Waki K."/>
            <person name="Watahiki A."/>
            <person name="Okamura-Oho Y."/>
            <person name="Suzuki H."/>
            <person name="Kawai J."/>
            <person name="Hayashizaki Y."/>
        </authorList>
    </citation>
    <scope>NUCLEOTIDE SEQUENCE [LARGE SCALE MRNA]</scope>
    <source>
        <strain>C57BL/6J</strain>
        <tissue>Skin</tissue>
        <tissue>Thymus</tissue>
    </source>
</reference>
<reference key="2">
    <citation type="journal article" date="2004" name="Genome Res.">
        <title>The status, quality, and expansion of the NIH full-length cDNA project: the Mammalian Gene Collection (MGC).</title>
        <authorList>
            <consortium name="The MGC Project Team"/>
        </authorList>
    </citation>
    <scope>NUCLEOTIDE SEQUENCE [LARGE SCALE MRNA]</scope>
    <source>
        <strain>FVB/N</strain>
        <tissue>Kidney</tissue>
    </source>
</reference>
<reference key="3">
    <citation type="journal article" date="2009" name="Immunity">
        <title>The phagosomal proteome in interferon-gamma-activated macrophages.</title>
        <authorList>
            <person name="Trost M."/>
            <person name="English L."/>
            <person name="Lemieux S."/>
            <person name="Courcelles M."/>
            <person name="Desjardins M."/>
            <person name="Thibault P."/>
        </authorList>
    </citation>
    <scope>IDENTIFICATION BY MASS SPECTROMETRY [LARGE SCALE ANALYSIS]</scope>
</reference>
<reference key="4">
    <citation type="journal article" date="2010" name="Cell">
        <title>A tissue-specific atlas of mouse protein phosphorylation and expression.</title>
        <authorList>
            <person name="Huttlin E.L."/>
            <person name="Jedrychowski M.P."/>
            <person name="Elias J.E."/>
            <person name="Goswami T."/>
            <person name="Rad R."/>
            <person name="Beausoleil S.A."/>
            <person name="Villen J."/>
            <person name="Haas W."/>
            <person name="Sowa M.E."/>
            <person name="Gygi S.P."/>
        </authorList>
    </citation>
    <scope>IDENTIFICATION BY MASS SPECTROMETRY [LARGE SCALE ANALYSIS]</scope>
    <source>
        <tissue>Testis</tissue>
    </source>
</reference>
<dbReference type="EMBL" id="AK042409">
    <property type="protein sequence ID" value="BAE20632.1"/>
    <property type="molecule type" value="mRNA"/>
</dbReference>
<dbReference type="EMBL" id="AK076332">
    <property type="protein sequence ID" value="BAC36302.1"/>
    <property type="molecule type" value="mRNA"/>
</dbReference>
<dbReference type="EMBL" id="BC014719">
    <property type="protein sequence ID" value="AAH14719.1"/>
    <property type="molecule type" value="mRNA"/>
</dbReference>
<dbReference type="CCDS" id="CCDS25302.1"/>
<dbReference type="RefSeq" id="NP_001156861.1">
    <property type="nucleotide sequence ID" value="NM_001163389.1"/>
</dbReference>
<dbReference type="RefSeq" id="NP_083241.1">
    <property type="nucleotide sequence ID" value="NM_028965.4"/>
</dbReference>
<dbReference type="RefSeq" id="XP_006534438.1">
    <property type="nucleotide sequence ID" value="XM_006534375.4"/>
</dbReference>
<dbReference type="RefSeq" id="XP_011247591.1">
    <property type="nucleotide sequence ID" value="XM_011249289.3"/>
</dbReference>
<dbReference type="SMR" id="Q91WL6"/>
<dbReference type="FunCoup" id="Q91WL6">
    <property type="interactions" value="870"/>
</dbReference>
<dbReference type="STRING" id="10090.ENSMUSP00000021246"/>
<dbReference type="iPTMnet" id="Q91WL6"/>
<dbReference type="PhosphoSitePlus" id="Q91WL6"/>
<dbReference type="SwissPalm" id="Q91WL6"/>
<dbReference type="PaxDb" id="10090-ENSMUSP00000021246"/>
<dbReference type="ProteomicsDB" id="261300"/>
<dbReference type="Pumba" id="Q91WL6"/>
<dbReference type="Antibodypedia" id="30244">
    <property type="antibodies" value="133 antibodies from 21 providers"/>
</dbReference>
<dbReference type="DNASU" id="74479"/>
<dbReference type="Ensembl" id="ENSMUST00000021246.9">
    <property type="protein sequence ID" value="ENSMUSP00000021246.3"/>
    <property type="gene ID" value="ENSMUSG00000020876.15"/>
</dbReference>
<dbReference type="Ensembl" id="ENSMUST00000107661.10">
    <property type="protein sequence ID" value="ENSMUSP00000103288.4"/>
    <property type="gene ID" value="ENSMUSG00000020876.15"/>
</dbReference>
<dbReference type="GeneID" id="74479"/>
<dbReference type="KEGG" id="mmu:74479"/>
<dbReference type="UCSC" id="uc007lci.2">
    <property type="organism name" value="mouse"/>
</dbReference>
<dbReference type="AGR" id="MGI:1921729"/>
<dbReference type="CTD" id="29916"/>
<dbReference type="MGI" id="MGI:1921729">
    <property type="gene designation" value="Snx11"/>
</dbReference>
<dbReference type="VEuPathDB" id="HostDB:ENSMUSG00000020876"/>
<dbReference type="eggNOG" id="KOG2527">
    <property type="taxonomic scope" value="Eukaryota"/>
</dbReference>
<dbReference type="GeneTree" id="ENSGT00940000160113"/>
<dbReference type="HOGENOM" id="CLU_057172_3_0_1"/>
<dbReference type="InParanoid" id="Q91WL6"/>
<dbReference type="OMA" id="SCCFIRR"/>
<dbReference type="OrthoDB" id="5227681at2759"/>
<dbReference type="PhylomeDB" id="Q91WL6"/>
<dbReference type="TreeFam" id="TF332117"/>
<dbReference type="BioGRID-ORCS" id="74479">
    <property type="hits" value="3 hits in 77 CRISPR screens"/>
</dbReference>
<dbReference type="ChiTaRS" id="Snx11">
    <property type="organism name" value="mouse"/>
</dbReference>
<dbReference type="PRO" id="PR:Q91WL6"/>
<dbReference type="Proteomes" id="UP000000589">
    <property type="component" value="Chromosome 11"/>
</dbReference>
<dbReference type="RNAct" id="Q91WL6">
    <property type="molecule type" value="protein"/>
</dbReference>
<dbReference type="Bgee" id="ENSMUSG00000020876">
    <property type="expression patterns" value="Expressed in granulocyte and 144 other cell types or tissues"/>
</dbReference>
<dbReference type="ExpressionAtlas" id="Q91WL6">
    <property type="expression patterns" value="baseline and differential"/>
</dbReference>
<dbReference type="GO" id="GO:0005737">
    <property type="term" value="C:cytoplasm"/>
    <property type="evidence" value="ECO:0000250"/>
    <property type="project" value="UniProtKB"/>
</dbReference>
<dbReference type="GO" id="GO:0005768">
    <property type="term" value="C:endosome"/>
    <property type="evidence" value="ECO:0000250"/>
    <property type="project" value="UniProtKB"/>
</dbReference>
<dbReference type="GO" id="GO:0005886">
    <property type="term" value="C:plasma membrane"/>
    <property type="evidence" value="ECO:0000250"/>
    <property type="project" value="UniProtKB"/>
</dbReference>
<dbReference type="GO" id="GO:1901981">
    <property type="term" value="F:phosphatidylinositol phosphate binding"/>
    <property type="evidence" value="ECO:0000250"/>
    <property type="project" value="UniProtKB"/>
</dbReference>
<dbReference type="GO" id="GO:0006886">
    <property type="term" value="P:intracellular protein transport"/>
    <property type="evidence" value="ECO:0007669"/>
    <property type="project" value="InterPro"/>
</dbReference>
<dbReference type="GO" id="GO:0016050">
    <property type="term" value="P:vesicle organization"/>
    <property type="evidence" value="ECO:0000250"/>
    <property type="project" value="UniProtKB"/>
</dbReference>
<dbReference type="CDD" id="cd06898">
    <property type="entry name" value="PX_SNX10"/>
    <property type="match status" value="1"/>
</dbReference>
<dbReference type="FunFam" id="3.30.1520.10:FF:000012">
    <property type="entry name" value="Sorting nexin 10"/>
    <property type="match status" value="1"/>
</dbReference>
<dbReference type="Gene3D" id="3.30.1520.10">
    <property type="entry name" value="Phox-like domain"/>
    <property type="match status" value="1"/>
</dbReference>
<dbReference type="InterPro" id="IPR001683">
    <property type="entry name" value="PX_dom"/>
</dbReference>
<dbReference type="InterPro" id="IPR036871">
    <property type="entry name" value="PX_dom_sf"/>
</dbReference>
<dbReference type="InterPro" id="IPR043544">
    <property type="entry name" value="SNX10/11"/>
</dbReference>
<dbReference type="PANTHER" id="PTHR46209">
    <property type="entry name" value="PX DOMAIN-CONTAINING PROTEIN"/>
    <property type="match status" value="1"/>
</dbReference>
<dbReference type="PANTHER" id="PTHR46209:SF1">
    <property type="entry name" value="SORTING NEXIN-11"/>
    <property type="match status" value="1"/>
</dbReference>
<dbReference type="Pfam" id="PF00787">
    <property type="entry name" value="PX"/>
    <property type="match status" value="1"/>
</dbReference>
<dbReference type="SMART" id="SM00312">
    <property type="entry name" value="PX"/>
    <property type="match status" value="1"/>
</dbReference>
<dbReference type="SUPFAM" id="SSF64268">
    <property type="entry name" value="PX domain"/>
    <property type="match status" value="1"/>
</dbReference>
<dbReference type="PROSITE" id="PS50195">
    <property type="entry name" value="PX"/>
    <property type="match status" value="1"/>
</dbReference>
<evidence type="ECO:0000250" key="1">
    <source>
        <dbReference type="UniProtKB" id="Q9Y5W9"/>
    </source>
</evidence>
<evidence type="ECO:0000255" key="2">
    <source>
        <dbReference type="PROSITE-ProRule" id="PRU00147"/>
    </source>
</evidence>
<evidence type="ECO:0000256" key="3">
    <source>
        <dbReference type="SAM" id="MobiDB-lite"/>
    </source>
</evidence>
<evidence type="ECO:0000305" key="4"/>
<sequence>MGLWYRMLENQDLEEVITVRVQDPRVQNEGSWNSYVDYKIFLHTNSKAFTAKTSCVRRRYREFVWLRKQLQRNAGLVPVPELPGKSTFFGGSDEFIEKRRQGLQHFLEKVLQSVVLLSDSQLHLFLQSQLSVPEIEACVQGRGAMTVSDAILSYAMSNCGWAQEERQSTSHLAKGDQLNSCCFLPRSGRRSSPSPPLSEEKEQLETWAPVMDSEGPSSESPTLLPSSSLPACWDPARPEEGLSVSQPARRAVAADQAGPMEPTQLDTAWDK</sequence>
<organism>
    <name type="scientific">Mus musculus</name>
    <name type="common">Mouse</name>
    <dbReference type="NCBI Taxonomy" id="10090"/>
    <lineage>
        <taxon>Eukaryota</taxon>
        <taxon>Metazoa</taxon>
        <taxon>Chordata</taxon>
        <taxon>Craniata</taxon>
        <taxon>Vertebrata</taxon>
        <taxon>Euteleostomi</taxon>
        <taxon>Mammalia</taxon>
        <taxon>Eutheria</taxon>
        <taxon>Euarchontoglires</taxon>
        <taxon>Glires</taxon>
        <taxon>Rodentia</taxon>
        <taxon>Myomorpha</taxon>
        <taxon>Muroidea</taxon>
        <taxon>Muridae</taxon>
        <taxon>Murinae</taxon>
        <taxon>Mus</taxon>
        <taxon>Mus</taxon>
    </lineage>
</organism>
<name>SNX11_MOUSE</name>
<comment type="function">
    <text evidence="1">Phosphoinositide-binding protein involved in protein sorting and membrane trafficking in endosomes. Regulates the levels of TRPV3 by promoting its trafficking from the cell membrane to lysosome for degradation.</text>
</comment>
<comment type="subunit">
    <text evidence="1">Monomer. Interacts with TRPV3; this interaction promotes TRPV3 trafficking from the cell membrane to lysosome for degradation.</text>
</comment>
<comment type="subcellular location">
    <subcellularLocation>
        <location evidence="1">Cell membrane</location>
        <topology evidence="4">Peripheral membrane protein</topology>
        <orientation evidence="4">Cytoplasmic side</orientation>
    </subcellularLocation>
    <subcellularLocation>
        <location evidence="1">Endosome</location>
    </subcellularLocation>
    <subcellularLocation>
        <location evidence="1">Cytoplasm</location>
    </subcellularLocation>
</comment>
<comment type="domain">
    <text evidence="1">The PX domain mediates interaction with membranes enriched in phosphatidylinositol 3-phosphate.</text>
</comment>
<comment type="similarity">
    <text evidence="4">Belongs to the sorting nexin family.</text>
</comment>
<proteinExistence type="evidence at protein level"/>